<proteinExistence type="inferred from homology"/>
<reference key="1">
    <citation type="journal article" date="2004" name="Nature">
        <title>Genome evolution in yeasts.</title>
        <authorList>
            <person name="Dujon B."/>
            <person name="Sherman D."/>
            <person name="Fischer G."/>
            <person name="Durrens P."/>
            <person name="Casaregola S."/>
            <person name="Lafontaine I."/>
            <person name="de Montigny J."/>
            <person name="Marck C."/>
            <person name="Neuveglise C."/>
            <person name="Talla E."/>
            <person name="Goffard N."/>
            <person name="Frangeul L."/>
            <person name="Aigle M."/>
            <person name="Anthouard V."/>
            <person name="Babour A."/>
            <person name="Barbe V."/>
            <person name="Barnay S."/>
            <person name="Blanchin S."/>
            <person name="Beckerich J.-M."/>
            <person name="Beyne E."/>
            <person name="Bleykasten C."/>
            <person name="Boisrame A."/>
            <person name="Boyer J."/>
            <person name="Cattolico L."/>
            <person name="Confanioleri F."/>
            <person name="de Daruvar A."/>
            <person name="Despons L."/>
            <person name="Fabre E."/>
            <person name="Fairhead C."/>
            <person name="Ferry-Dumazet H."/>
            <person name="Groppi A."/>
            <person name="Hantraye F."/>
            <person name="Hennequin C."/>
            <person name="Jauniaux N."/>
            <person name="Joyet P."/>
            <person name="Kachouri R."/>
            <person name="Kerrest A."/>
            <person name="Koszul R."/>
            <person name="Lemaire M."/>
            <person name="Lesur I."/>
            <person name="Ma L."/>
            <person name="Muller H."/>
            <person name="Nicaud J.-M."/>
            <person name="Nikolski M."/>
            <person name="Oztas S."/>
            <person name="Ozier-Kalogeropoulos O."/>
            <person name="Pellenz S."/>
            <person name="Potier S."/>
            <person name="Richard G.-F."/>
            <person name="Straub M.-L."/>
            <person name="Suleau A."/>
            <person name="Swennen D."/>
            <person name="Tekaia F."/>
            <person name="Wesolowski-Louvel M."/>
            <person name="Westhof E."/>
            <person name="Wirth B."/>
            <person name="Zeniou-Meyer M."/>
            <person name="Zivanovic Y."/>
            <person name="Bolotin-Fukuhara M."/>
            <person name="Thierry A."/>
            <person name="Bouchier C."/>
            <person name="Caudron B."/>
            <person name="Scarpelli C."/>
            <person name="Gaillardin C."/>
            <person name="Weissenbach J."/>
            <person name="Wincker P."/>
            <person name="Souciet J.-L."/>
        </authorList>
    </citation>
    <scope>NUCLEOTIDE SEQUENCE [LARGE SCALE GENOMIC DNA]</scope>
    <source>
        <strain>ATCC 8585 / CBS 2359 / DSM 70799 / NBRC 1267 / NRRL Y-1140 / WM37</strain>
    </source>
</reference>
<gene>
    <name type="primary">ATG18</name>
    <name type="ordered locus">KLLA0D04664g</name>
</gene>
<organism>
    <name type="scientific">Kluyveromyces lactis (strain ATCC 8585 / CBS 2359 / DSM 70799 / NBRC 1267 / NRRL Y-1140 / WM37)</name>
    <name type="common">Yeast</name>
    <name type="synonym">Candida sphaerica</name>
    <dbReference type="NCBI Taxonomy" id="284590"/>
    <lineage>
        <taxon>Eukaryota</taxon>
        <taxon>Fungi</taxon>
        <taxon>Dikarya</taxon>
        <taxon>Ascomycota</taxon>
        <taxon>Saccharomycotina</taxon>
        <taxon>Saccharomycetes</taxon>
        <taxon>Saccharomycetales</taxon>
        <taxon>Saccharomycetaceae</taxon>
        <taxon>Kluyveromyces</taxon>
    </lineage>
</organism>
<comment type="function">
    <text evidence="1">The PI(3,5)P2 regulatory complex regulates both the synthesis and turnover of phosphatidylinositol 3,5-bisphosphate (PtdIns(3,5)P2). Necessary for proper vacuole morphology. Plays an important role in osmotically-induced vacuole fragmentation. Required for cytoplasm to vacuole transport (Cvt) vesicle formation, pexophagy and starvation-induced autophagy. Involved in correct ATG9 trafficking to the pre-autophagosomal structure. Might also be involved in premeiotic DNA replication (By similarity).</text>
</comment>
<comment type="subunit">
    <text evidence="1">Component of the PI(3,5)P2 regulatory complex.</text>
</comment>
<comment type="subcellular location">
    <subcellularLocation>
        <location evidence="1">Preautophagosomal structure membrane</location>
        <topology evidence="1">Peripheral membrane protein</topology>
    </subcellularLocation>
    <subcellularLocation>
        <location evidence="1">Vacuole membrane</location>
        <topology evidence="1">Peripheral membrane protein</topology>
    </subcellularLocation>
    <subcellularLocation>
        <location evidence="1">Endosome membrane</location>
        <topology evidence="1">Peripheral membrane protein</topology>
    </subcellularLocation>
</comment>
<comment type="domain">
    <text evidence="1">The N-terminus might form a beta-propeller domain involved in specific binding to phosphatidylinositol 3,5-bisphosphate (PIP2), leading to the association of the protein to the membrane.</text>
</comment>
<comment type="domain">
    <text evidence="2">The L/FRRG motif is essential for the cytoplasm to vacuole transport (Cvt) pathway, for the recruitment of ATG8 and ATG16 to the PAS in nutrient-rich medium, and for its recruitment to and dissociation from the PAS under starvation conditions.</text>
</comment>
<comment type="similarity">
    <text evidence="4">Belongs to the WD repeat PROPPIN family.</text>
</comment>
<sequence>MSNLPIINFINFNQNGSCISMGTSQGFKIFNCEPFGRFYQDEEGGCGIVEMLFSTSLLAVVGMGDNPAMSPRRLRMLNTKRHSVICEVTFPTTILSVKMNKSRLAVLLQEQIYIYDISNMRLLHTIETSMNAQGIMSMSPNSENNYLVYPSPPKVINSEIKDHATTNNINIKKTDAVDDTIKKDYSLQVPSDITGQQQQQQPGVDPATSNNTANKIIKNGDVIVFNLQTLQPTMVIEAHKGEIAALKLSADGTLLATASEKGTIIRVFNVENGSKVYQFRRGTYPTKISSLSFSKDNQFLAVCSSSKTVHIFKLGKNTVDNKSNELNSDDEIEDDLVPRYGDEDEEDEEIDEEATSINSNHSSKEPVVDAKRSTVGRMIRKSSQRLSRKAARTLGAYFPIKVSSILEPSRHFASLKITTSSNQPIKAIAAIDDPIELSIKEYPDLFEKNASNNGDYQNSDTLTMVPIRVVSSEGFMYKYISDPERGGDCILLEQYSLLSD</sequence>
<protein>
    <recommendedName>
        <fullName>Autophagy-related protein 18</fullName>
    </recommendedName>
</protein>
<evidence type="ECO:0000250" key="1"/>
<evidence type="ECO:0000250" key="2">
    <source>
        <dbReference type="UniProtKB" id="P43601"/>
    </source>
</evidence>
<evidence type="ECO:0000256" key="3">
    <source>
        <dbReference type="SAM" id="MobiDB-lite"/>
    </source>
</evidence>
<evidence type="ECO:0000305" key="4"/>
<keyword id="KW-0072">Autophagy</keyword>
<keyword id="KW-0967">Endosome</keyword>
<keyword id="KW-0472">Membrane</keyword>
<keyword id="KW-0653">Protein transport</keyword>
<keyword id="KW-1185">Reference proteome</keyword>
<keyword id="KW-0677">Repeat</keyword>
<keyword id="KW-0813">Transport</keyword>
<keyword id="KW-0926">Vacuole</keyword>
<keyword id="KW-0853">WD repeat</keyword>
<dbReference type="EMBL" id="CR382124">
    <property type="protein sequence ID" value="CAH00364.1"/>
    <property type="molecule type" value="Genomic_DNA"/>
</dbReference>
<dbReference type="RefSeq" id="XP_453268.1">
    <property type="nucleotide sequence ID" value="XM_453268.1"/>
</dbReference>
<dbReference type="SMR" id="Q6CS21"/>
<dbReference type="FunCoup" id="Q6CS21">
    <property type="interactions" value="585"/>
</dbReference>
<dbReference type="STRING" id="284590.Q6CS21"/>
<dbReference type="PaxDb" id="284590-Q6CS21"/>
<dbReference type="KEGG" id="kla:KLLA0_D04664g"/>
<dbReference type="eggNOG" id="KOG2110">
    <property type="taxonomic scope" value="Eukaryota"/>
</dbReference>
<dbReference type="HOGENOM" id="CLU_025895_5_2_1"/>
<dbReference type="InParanoid" id="Q6CS21"/>
<dbReference type="OMA" id="KTMGRMI"/>
<dbReference type="Proteomes" id="UP000000598">
    <property type="component" value="Chromosome D"/>
</dbReference>
<dbReference type="GO" id="GO:0010008">
    <property type="term" value="C:endosome membrane"/>
    <property type="evidence" value="ECO:0007669"/>
    <property type="project" value="UniProtKB-SubCell"/>
</dbReference>
<dbReference type="GO" id="GO:0034045">
    <property type="term" value="C:phagophore assembly site membrane"/>
    <property type="evidence" value="ECO:0007669"/>
    <property type="project" value="UniProtKB-SubCell"/>
</dbReference>
<dbReference type="GO" id="GO:0005774">
    <property type="term" value="C:vacuolar membrane"/>
    <property type="evidence" value="ECO:0007669"/>
    <property type="project" value="UniProtKB-SubCell"/>
</dbReference>
<dbReference type="GO" id="GO:0006914">
    <property type="term" value="P:autophagy"/>
    <property type="evidence" value="ECO:0007669"/>
    <property type="project" value="UniProtKB-KW"/>
</dbReference>
<dbReference type="GO" id="GO:0015031">
    <property type="term" value="P:protein transport"/>
    <property type="evidence" value="ECO:0007669"/>
    <property type="project" value="UniProtKB-KW"/>
</dbReference>
<dbReference type="Gene3D" id="2.130.10.10">
    <property type="entry name" value="YVTN repeat-like/Quinoprotein amine dehydrogenase"/>
    <property type="match status" value="1"/>
</dbReference>
<dbReference type="InterPro" id="IPR048720">
    <property type="entry name" value="PROPPIN"/>
</dbReference>
<dbReference type="InterPro" id="IPR015943">
    <property type="entry name" value="WD40/YVTN_repeat-like_dom_sf"/>
</dbReference>
<dbReference type="InterPro" id="IPR036322">
    <property type="entry name" value="WD40_repeat_dom_sf"/>
</dbReference>
<dbReference type="InterPro" id="IPR001680">
    <property type="entry name" value="WD40_rpt"/>
</dbReference>
<dbReference type="PANTHER" id="PTHR11227">
    <property type="entry name" value="WD-REPEAT PROTEIN INTERACTING WITH PHOSPHOINOSIDES WIPI -RELATED"/>
    <property type="match status" value="1"/>
</dbReference>
<dbReference type="Pfam" id="PF21032">
    <property type="entry name" value="PROPPIN"/>
    <property type="match status" value="2"/>
</dbReference>
<dbReference type="SMART" id="SM00320">
    <property type="entry name" value="WD40"/>
    <property type="match status" value="2"/>
</dbReference>
<dbReference type="SUPFAM" id="SSF50978">
    <property type="entry name" value="WD40 repeat-like"/>
    <property type="match status" value="1"/>
</dbReference>
<name>ATG18_KLULA</name>
<accession>Q6CS21</accession>
<feature type="chain" id="PRO_0000050867" description="Autophagy-related protein 18">
    <location>
        <begin position="1"/>
        <end position="500"/>
    </location>
</feature>
<feature type="repeat" description="WD 1">
    <location>
        <begin position="238"/>
        <end position="278"/>
    </location>
</feature>
<feature type="repeat" description="WD 2">
    <location>
        <begin position="283"/>
        <end position="322"/>
    </location>
</feature>
<feature type="region of interest" description="Disordered" evidence="3">
    <location>
        <begin position="192"/>
        <end position="212"/>
    </location>
</feature>
<feature type="region of interest" description="Disordered" evidence="3">
    <location>
        <begin position="320"/>
        <end position="374"/>
    </location>
</feature>
<feature type="short sequence motif" description="L/FRRG motif" evidence="2">
    <location>
        <begin position="279"/>
        <end position="283"/>
    </location>
</feature>
<feature type="compositionally biased region" description="Acidic residues" evidence="3">
    <location>
        <begin position="342"/>
        <end position="354"/>
    </location>
</feature>
<feature type="compositionally biased region" description="Basic and acidic residues" evidence="3">
    <location>
        <begin position="362"/>
        <end position="372"/>
    </location>
</feature>